<comment type="function">
    <text evidence="4 9">Involved in the folding of the extracellular lipase (lip) during its passage through the periplasm.</text>
</comment>
<comment type="subunit">
    <text evidence="2">Monomer. Interacts with lipase (lip).</text>
</comment>
<comment type="interaction">
    <interactant intactId="EBI-993746">
        <id>Q05490</id>
    </interactant>
    <interactant intactId="EBI-26563962">
        <id>P0DUB8</id>
        <label>lip</label>
    </interactant>
    <organismsDiffer>false</organismsDiffer>
    <experiments>3</experiments>
</comment>
<comment type="subcellular location">
    <subcellularLocation>
        <location evidence="3">Cell inner membrane</location>
        <topology evidence="9">Single-pass membrane protein</topology>
        <orientation evidence="9">Periplasmic side</orientation>
    </subcellularLocation>
</comment>
<comment type="induction">
    <text evidence="3">By growth on olive oil or oleic acid; part of the lip-lifO (also called lipA-lipB) operon.</text>
</comment>
<comment type="disruption phenotype">
    <text evidence="3 4">Significant loss of extracellular active lipase (lip). Not required for growth on oleic acid as a carbon source (PubMed:8412704). Cells can translate lipase; while its signal peptide is processed, it is not secreted (PubMed:8412705).</text>
</comment>
<comment type="similarity">
    <text evidence="8">Belongs to the lipase chaperone family.</text>
</comment>
<organism>
    <name type="scientific">Burkholderia plantarii</name>
    <dbReference type="NCBI Taxonomy" id="41899"/>
    <lineage>
        <taxon>Bacteria</taxon>
        <taxon>Pseudomonadati</taxon>
        <taxon>Pseudomonadota</taxon>
        <taxon>Betaproteobacteria</taxon>
        <taxon>Burkholderiales</taxon>
        <taxon>Burkholderiaceae</taxon>
        <taxon>Burkholderia</taxon>
    </lineage>
</organism>
<name>LIFO_BURPL</name>
<reference key="1">
    <citation type="journal article" date="1993" name="Mol. Microbiol.">
        <title>An accessory gene, lipB, required for the production of active Pseudomonas glumae lipase.</title>
        <authorList>
            <person name="Frenken L.G.J."/>
            <person name="Bos J.W."/>
            <person name="Visser C."/>
            <person name="Mueller W."/>
            <person name="Tommassen J."/>
            <person name="Verrips C.T."/>
        </authorList>
    </citation>
    <scope>NUCLEOTIDE SEQUENCE [GENOMIC DNA]</scope>
    <scope>POSSIBLE FUNCTION</scope>
    <scope>SUBCELLULAR LOCATION</scope>
    <scope>INDUCTION</scope>
    <scope>DISRUPTION PHENOTYPE</scope>
    <scope>TOPOLOGY</scope>
    <source>
        <strain>PG1 / CBS 322.89</strain>
    </source>
</reference>
<reference key="2">
    <citation type="journal article" date="1993" name="Mol. Microbiol.">
        <title>Role of the lipB gene product in the folding of the secreted lipase of Pseudomonas glumae.</title>
        <authorList>
            <person name="Frenken L.G.J."/>
            <person name="de Groot A."/>
            <person name="Tommassen J."/>
            <person name="Verrips C.T."/>
        </authorList>
    </citation>
    <scope>FUNCTION</scope>
    <scope>DISRUPTION PHENOTYPE</scope>
    <source>
        <strain>PG1 / CBS 322.89</strain>
    </source>
</reference>
<reference evidence="10" key="3">
    <citation type="journal article" date="2006" name="Nat. Struct. Mol. Biol.">
        <title>Structure of a membrane-based steric chaperone in complex with its lipase substrate.</title>
        <authorList>
            <person name="Pauwels K."/>
            <person name="Lustig A."/>
            <person name="Wyns L."/>
            <person name="Tommassen J."/>
            <person name="Savvides S.N."/>
            <person name="Van Gelder P."/>
        </authorList>
    </citation>
    <scope>X-RAY CRYSTALLOGRAPHY (1.85 ANGSTROMS) OF 42-352 IN COMPLEX WITH LIP</scope>
    <scope>FUNCTION</scope>
    <scope>SUBUNIT</scope>
    <source>
        <strain>PG1 / CBS 322.89</strain>
    </source>
</reference>
<gene>
    <name evidence="8" type="primary">lifO</name>
    <name evidence="6" type="synonym">lipB</name>
</gene>
<protein>
    <recommendedName>
        <fullName evidence="7">Lipase-specific foldase</fullName>
        <shortName evidence="5">Lif</shortName>
    </recommendedName>
    <alternativeName>
        <fullName>Lipase activator protein</fullName>
    </alternativeName>
    <alternativeName>
        <fullName>Lipase chaperone</fullName>
    </alternativeName>
    <alternativeName>
        <fullName>Lipase helper protein</fullName>
    </alternativeName>
    <alternativeName>
        <fullName>Lipase modulator</fullName>
    </alternativeName>
</protein>
<proteinExistence type="evidence at protein level"/>
<feature type="chain" id="PRO_0000218481" description="Lipase-specific foldase">
    <location>
        <begin position="1"/>
        <end position="353"/>
    </location>
</feature>
<feature type="topological domain" description="Cytoplasmic" evidence="9">
    <location>
        <begin position="1"/>
        <end position="19"/>
    </location>
</feature>
<feature type="transmembrane region" description="Helical" evidence="1">
    <location>
        <begin position="20"/>
        <end position="40"/>
    </location>
</feature>
<feature type="topological domain" description="Periplasmic" evidence="9">
    <location>
        <begin position="41"/>
        <end position="353"/>
    </location>
</feature>
<feature type="turn" evidence="11">
    <location>
        <begin position="81"/>
        <end position="85"/>
    </location>
</feature>
<feature type="strand" evidence="11">
    <location>
        <begin position="97"/>
        <end position="99"/>
    </location>
</feature>
<feature type="helix" evidence="11">
    <location>
        <begin position="104"/>
        <end position="113"/>
    </location>
</feature>
<feature type="helix" evidence="11">
    <location>
        <begin position="114"/>
        <end position="118"/>
    </location>
</feature>
<feature type="helix" evidence="11">
    <location>
        <begin position="121"/>
        <end position="136"/>
    </location>
</feature>
<feature type="strand" evidence="11">
    <location>
        <begin position="137"/>
        <end position="139"/>
    </location>
</feature>
<feature type="helix" evidence="11">
    <location>
        <begin position="140"/>
        <end position="157"/>
    </location>
</feature>
<feature type="helix" evidence="11">
    <location>
        <begin position="175"/>
        <end position="192"/>
    </location>
</feature>
<feature type="helix" evidence="11">
    <location>
        <begin position="194"/>
        <end position="196"/>
    </location>
</feature>
<feature type="helix" evidence="11">
    <location>
        <begin position="197"/>
        <end position="218"/>
    </location>
</feature>
<feature type="helix" evidence="11">
    <location>
        <begin position="228"/>
        <end position="235"/>
    </location>
</feature>
<feature type="helix" evidence="11">
    <location>
        <begin position="241"/>
        <end position="265"/>
    </location>
</feature>
<feature type="helix" evidence="11">
    <location>
        <begin position="270"/>
        <end position="278"/>
    </location>
</feature>
<feature type="helix" evidence="11">
    <location>
        <begin position="283"/>
        <end position="314"/>
    </location>
</feature>
<feature type="helix" evidence="11">
    <location>
        <begin position="320"/>
        <end position="334"/>
    </location>
</feature>
<feature type="helix" evidence="11">
    <location>
        <begin position="340"/>
        <end position="348"/>
    </location>
</feature>
<keyword id="KW-0002">3D-structure</keyword>
<keyword id="KW-0997">Cell inner membrane</keyword>
<keyword id="KW-1003">Cell membrane</keyword>
<keyword id="KW-0143">Chaperone</keyword>
<keyword id="KW-0442">Lipid degradation</keyword>
<keyword id="KW-0443">Lipid metabolism</keyword>
<keyword id="KW-0472">Membrane</keyword>
<keyword id="KW-0812">Transmembrane</keyword>
<keyword id="KW-1133">Transmembrane helix</keyword>
<evidence type="ECO:0000255" key="1"/>
<evidence type="ECO:0000269" key="2">
    <source>
    </source>
</evidence>
<evidence type="ECO:0000269" key="3">
    <source>
    </source>
</evidence>
<evidence type="ECO:0000269" key="4">
    <source>
    </source>
</evidence>
<evidence type="ECO:0000303" key="5">
    <source>
    </source>
</evidence>
<evidence type="ECO:0000303" key="6">
    <source>
    </source>
</evidence>
<evidence type="ECO:0000303" key="7">
    <source>
    </source>
</evidence>
<evidence type="ECO:0000305" key="8"/>
<evidence type="ECO:0000305" key="9">
    <source>
    </source>
</evidence>
<evidence type="ECO:0007744" key="10">
    <source>
        <dbReference type="PDB" id="2ES4"/>
    </source>
</evidence>
<evidence type="ECO:0007829" key="11">
    <source>
        <dbReference type="PDB" id="2ES4"/>
    </source>
</evidence>
<sequence length="353" mass="36831">MAQADRPARGGLAARPMRGASFALAGLVACAACAAVVLWLRPAAPSPAPAGAVAGGPAAGVPAAASGAAEAAMPLPAALPGALAGSHAPRLPLAAGGRLARTRAVREFFDYCLTAQGELTPAALDALVRREIAAQLDGSPAQAEALGVWRRYRAYFDALAQLPGDGAVLGDKLDPAAMQLALDQRAALADRTLGEWAEPFFGDEQRRQRHDLERIRIANDTTLSPEQKAARLAALDAQLTPDERAQQAALHAQQDAVTKIADLQKAGATPDQMRAQIAQTLGPEAAARAAQMQQDDEAWQTRYQAYAAERDRIAAQGLAPQDRDARIAQLRQQTFTAPGEAIRAASLDRGAGG</sequence>
<dbReference type="EMBL" id="X70354">
    <property type="protein sequence ID" value="CAA49813.1"/>
    <property type="molecule type" value="Genomic_DNA"/>
</dbReference>
<dbReference type="PIR" id="S36249">
    <property type="entry name" value="S36249"/>
</dbReference>
<dbReference type="RefSeq" id="WP_042628288.1">
    <property type="nucleotide sequence ID" value="NZ_CP002581.1"/>
</dbReference>
<dbReference type="PDB" id="2ES4">
    <property type="method" value="X-ray"/>
    <property type="resolution" value="1.85 A"/>
    <property type="chains" value="D/E=42-352"/>
</dbReference>
<dbReference type="PDBsum" id="2ES4"/>
<dbReference type="SMR" id="Q05490"/>
<dbReference type="DIP" id="DIP-29068N"/>
<dbReference type="IntAct" id="Q05490">
    <property type="interactions" value="1"/>
</dbReference>
<dbReference type="EvolutionaryTrace" id="Q05490"/>
<dbReference type="GO" id="GO:0005886">
    <property type="term" value="C:plasma membrane"/>
    <property type="evidence" value="ECO:0007669"/>
    <property type="project" value="UniProtKB-SubCell"/>
</dbReference>
<dbReference type="GO" id="GO:0051082">
    <property type="term" value="F:unfolded protein binding"/>
    <property type="evidence" value="ECO:0007669"/>
    <property type="project" value="UniProtKB-UniRule"/>
</dbReference>
<dbReference type="GO" id="GO:0016042">
    <property type="term" value="P:lipid catabolic process"/>
    <property type="evidence" value="ECO:0007669"/>
    <property type="project" value="UniProtKB-UniRule"/>
</dbReference>
<dbReference type="GO" id="GO:0006457">
    <property type="term" value="P:protein folding"/>
    <property type="evidence" value="ECO:0007669"/>
    <property type="project" value="UniProtKB-UniRule"/>
</dbReference>
<dbReference type="HAMAP" id="MF_00790">
    <property type="entry name" value="Lipase_chap"/>
    <property type="match status" value="1"/>
</dbReference>
<dbReference type="InterPro" id="IPR004961">
    <property type="entry name" value="Lipase_chaperone"/>
</dbReference>
<dbReference type="NCBIfam" id="NF002333">
    <property type="entry name" value="PRK01294.1-1"/>
    <property type="match status" value="1"/>
</dbReference>
<dbReference type="Pfam" id="PF03280">
    <property type="entry name" value="Lipase_chap"/>
    <property type="match status" value="1"/>
</dbReference>
<dbReference type="SUPFAM" id="SSF158855">
    <property type="entry name" value="Lipase chaperone-like"/>
    <property type="match status" value="1"/>
</dbReference>
<accession>Q05490</accession>